<evidence type="ECO:0000255" key="1">
    <source>
        <dbReference type="HAMAP-Rule" id="MF_00161"/>
    </source>
</evidence>
<proteinExistence type="inferred from homology"/>
<feature type="chain" id="PRO_0000178772" description="Lipoprotein signal peptidase">
    <location>
        <begin position="1"/>
        <end position="156"/>
    </location>
</feature>
<feature type="transmembrane region" description="Helical" evidence="1">
    <location>
        <begin position="8"/>
        <end position="28"/>
    </location>
</feature>
<feature type="transmembrane region" description="Helical" evidence="1">
    <location>
        <begin position="39"/>
        <end position="59"/>
    </location>
</feature>
<feature type="transmembrane region" description="Helical" evidence="1">
    <location>
        <begin position="67"/>
        <end position="87"/>
    </location>
</feature>
<feature type="transmembrane region" description="Helical" evidence="1">
    <location>
        <begin position="99"/>
        <end position="119"/>
    </location>
</feature>
<feature type="transmembrane region" description="Helical" evidence="1">
    <location>
        <begin position="129"/>
        <end position="149"/>
    </location>
</feature>
<feature type="active site" evidence="1">
    <location>
        <position position="120"/>
    </location>
</feature>
<feature type="active site" evidence="1">
    <location>
        <position position="138"/>
    </location>
</feature>
<keyword id="KW-0064">Aspartyl protease</keyword>
<keyword id="KW-0997">Cell inner membrane</keyword>
<keyword id="KW-1003">Cell membrane</keyword>
<keyword id="KW-0378">Hydrolase</keyword>
<keyword id="KW-0472">Membrane</keyword>
<keyword id="KW-0645">Protease</keyword>
<keyword id="KW-0812">Transmembrane</keyword>
<keyword id="KW-1133">Transmembrane helix</keyword>
<name>LSPA_BUCAP</name>
<organism>
    <name type="scientific">Buchnera aphidicola subsp. Schizaphis graminum (strain Sg)</name>
    <dbReference type="NCBI Taxonomy" id="198804"/>
    <lineage>
        <taxon>Bacteria</taxon>
        <taxon>Pseudomonadati</taxon>
        <taxon>Pseudomonadota</taxon>
        <taxon>Gammaproteobacteria</taxon>
        <taxon>Enterobacterales</taxon>
        <taxon>Erwiniaceae</taxon>
        <taxon>Buchnera</taxon>
    </lineage>
</organism>
<accession>Q8K9Z3</accession>
<gene>
    <name evidence="1" type="primary">lspA</name>
    <name type="ordered locus">BUsg_141</name>
</gene>
<dbReference type="EC" id="3.4.23.36" evidence="1"/>
<dbReference type="EMBL" id="AE013218">
    <property type="protein sequence ID" value="AAM67709.1"/>
    <property type="molecule type" value="Genomic_DNA"/>
</dbReference>
<dbReference type="RefSeq" id="WP_011053676.1">
    <property type="nucleotide sequence ID" value="NC_004061.1"/>
</dbReference>
<dbReference type="SMR" id="Q8K9Z3"/>
<dbReference type="STRING" id="198804.BUsg_141"/>
<dbReference type="GeneID" id="93003611"/>
<dbReference type="KEGG" id="bas:BUsg_141"/>
<dbReference type="eggNOG" id="COG0597">
    <property type="taxonomic scope" value="Bacteria"/>
</dbReference>
<dbReference type="HOGENOM" id="CLU_083252_4_3_6"/>
<dbReference type="UniPathway" id="UPA00665"/>
<dbReference type="Proteomes" id="UP000000416">
    <property type="component" value="Chromosome"/>
</dbReference>
<dbReference type="GO" id="GO:0005886">
    <property type="term" value="C:plasma membrane"/>
    <property type="evidence" value="ECO:0007669"/>
    <property type="project" value="UniProtKB-SubCell"/>
</dbReference>
<dbReference type="GO" id="GO:0004190">
    <property type="term" value="F:aspartic-type endopeptidase activity"/>
    <property type="evidence" value="ECO:0007669"/>
    <property type="project" value="UniProtKB-UniRule"/>
</dbReference>
<dbReference type="GO" id="GO:0006508">
    <property type="term" value="P:proteolysis"/>
    <property type="evidence" value="ECO:0007669"/>
    <property type="project" value="UniProtKB-KW"/>
</dbReference>
<dbReference type="HAMAP" id="MF_00161">
    <property type="entry name" value="LspA"/>
    <property type="match status" value="1"/>
</dbReference>
<dbReference type="InterPro" id="IPR001872">
    <property type="entry name" value="Peptidase_A8"/>
</dbReference>
<dbReference type="NCBIfam" id="TIGR00077">
    <property type="entry name" value="lspA"/>
    <property type="match status" value="1"/>
</dbReference>
<dbReference type="PANTHER" id="PTHR33695">
    <property type="entry name" value="LIPOPROTEIN SIGNAL PEPTIDASE"/>
    <property type="match status" value="1"/>
</dbReference>
<dbReference type="PANTHER" id="PTHR33695:SF1">
    <property type="entry name" value="LIPOPROTEIN SIGNAL PEPTIDASE"/>
    <property type="match status" value="1"/>
</dbReference>
<dbReference type="Pfam" id="PF01252">
    <property type="entry name" value="Peptidase_A8"/>
    <property type="match status" value="1"/>
</dbReference>
<dbReference type="PRINTS" id="PR00781">
    <property type="entry name" value="LIPOSIGPTASE"/>
</dbReference>
<dbReference type="PROSITE" id="PS00855">
    <property type="entry name" value="SPASE_II"/>
    <property type="match status" value="1"/>
</dbReference>
<sequence length="156" mass="18748">MKRKYYWIYINIIFFIITVDFYSKKWILNHLNIYEKQKVFFILNLFHVHNFGAAFSILSDQNGWQKYFLLIFSIIIILAIIKIMIKFKKKDKNKILSYSLILAGAIGNLIDRINYGFVIDFIDLHFKSWHFATFNIADFSIFIGMIMIIKKNYYNS</sequence>
<protein>
    <recommendedName>
        <fullName evidence="1">Lipoprotein signal peptidase</fullName>
        <ecNumber evidence="1">3.4.23.36</ecNumber>
    </recommendedName>
    <alternativeName>
        <fullName evidence="1">Prolipoprotein signal peptidase</fullName>
    </alternativeName>
    <alternativeName>
        <fullName evidence="1">Signal peptidase II</fullName>
        <shortName evidence="1">SPase II</shortName>
    </alternativeName>
</protein>
<comment type="function">
    <text evidence="1">This protein specifically catalyzes the removal of signal peptides from prolipoproteins.</text>
</comment>
<comment type="catalytic activity">
    <reaction evidence="1">
        <text>Release of signal peptides from bacterial membrane prolipoproteins. Hydrolyzes -Xaa-Yaa-Zaa-|-(S,diacylglyceryl)Cys-, in which Xaa is hydrophobic (preferably Leu), and Yaa (Ala or Ser) and Zaa (Gly or Ala) have small, neutral side chains.</text>
        <dbReference type="EC" id="3.4.23.36"/>
    </reaction>
</comment>
<comment type="pathway">
    <text evidence="1">Protein modification; lipoprotein biosynthesis (signal peptide cleavage).</text>
</comment>
<comment type="subcellular location">
    <subcellularLocation>
        <location evidence="1">Cell inner membrane</location>
        <topology evidence="1">Multi-pass membrane protein</topology>
    </subcellularLocation>
</comment>
<comment type="similarity">
    <text evidence="1">Belongs to the peptidase A8 family.</text>
</comment>
<reference key="1">
    <citation type="journal article" date="2002" name="Science">
        <title>50 million years of genomic stasis in endosymbiotic bacteria.</title>
        <authorList>
            <person name="Tamas I."/>
            <person name="Klasson L."/>
            <person name="Canbaeck B."/>
            <person name="Naeslund A.K."/>
            <person name="Eriksson A.-S."/>
            <person name="Wernegreen J.J."/>
            <person name="Sandstroem J.P."/>
            <person name="Moran N.A."/>
            <person name="Andersson S.G.E."/>
        </authorList>
    </citation>
    <scope>NUCLEOTIDE SEQUENCE [LARGE SCALE GENOMIC DNA]</scope>
    <source>
        <strain>Sg</strain>
    </source>
</reference>